<dbReference type="EMBL" id="AF160594">
    <property type="protein sequence ID" value="AAF15210.1"/>
    <property type="molecule type" value="Genomic_DNA"/>
</dbReference>
<dbReference type="EMBL" id="AF160593">
    <property type="protein sequence ID" value="AAF15209.1"/>
    <property type="molecule type" value="Genomic_DNA"/>
</dbReference>
<dbReference type="SMR" id="Q9T475"/>
<dbReference type="GO" id="GO:0005743">
    <property type="term" value="C:mitochondrial inner membrane"/>
    <property type="evidence" value="ECO:0007669"/>
    <property type="project" value="UniProtKB-SubCell"/>
</dbReference>
<dbReference type="GO" id="GO:0045275">
    <property type="term" value="C:respiratory chain complex III"/>
    <property type="evidence" value="ECO:0007669"/>
    <property type="project" value="InterPro"/>
</dbReference>
<dbReference type="GO" id="GO:0046872">
    <property type="term" value="F:metal ion binding"/>
    <property type="evidence" value="ECO:0007669"/>
    <property type="project" value="UniProtKB-KW"/>
</dbReference>
<dbReference type="GO" id="GO:0008121">
    <property type="term" value="F:ubiquinol-cytochrome-c reductase activity"/>
    <property type="evidence" value="ECO:0007669"/>
    <property type="project" value="InterPro"/>
</dbReference>
<dbReference type="GO" id="GO:0006122">
    <property type="term" value="P:mitochondrial electron transport, ubiquinol to cytochrome c"/>
    <property type="evidence" value="ECO:0007669"/>
    <property type="project" value="TreeGrafter"/>
</dbReference>
<dbReference type="CDD" id="cd00290">
    <property type="entry name" value="cytochrome_b_C"/>
    <property type="match status" value="1"/>
</dbReference>
<dbReference type="CDD" id="cd00284">
    <property type="entry name" value="Cytochrome_b_N"/>
    <property type="match status" value="1"/>
</dbReference>
<dbReference type="FunFam" id="1.20.810.10:FF:000002">
    <property type="entry name" value="Cytochrome b"/>
    <property type="match status" value="1"/>
</dbReference>
<dbReference type="Gene3D" id="1.20.810.10">
    <property type="entry name" value="Cytochrome Bc1 Complex, Chain C"/>
    <property type="match status" value="1"/>
</dbReference>
<dbReference type="InterPro" id="IPR005798">
    <property type="entry name" value="Cyt_b/b6_C"/>
</dbReference>
<dbReference type="InterPro" id="IPR036150">
    <property type="entry name" value="Cyt_b/b6_C_sf"/>
</dbReference>
<dbReference type="InterPro" id="IPR005797">
    <property type="entry name" value="Cyt_b/b6_N"/>
</dbReference>
<dbReference type="InterPro" id="IPR027387">
    <property type="entry name" value="Cytb/b6-like_sf"/>
</dbReference>
<dbReference type="InterPro" id="IPR030689">
    <property type="entry name" value="Cytochrome_b"/>
</dbReference>
<dbReference type="InterPro" id="IPR048260">
    <property type="entry name" value="Cytochrome_b_C_euk/bac"/>
</dbReference>
<dbReference type="InterPro" id="IPR048259">
    <property type="entry name" value="Cytochrome_b_N_euk/bac"/>
</dbReference>
<dbReference type="InterPro" id="IPR016174">
    <property type="entry name" value="Di-haem_cyt_TM"/>
</dbReference>
<dbReference type="PANTHER" id="PTHR19271">
    <property type="entry name" value="CYTOCHROME B"/>
    <property type="match status" value="1"/>
</dbReference>
<dbReference type="PANTHER" id="PTHR19271:SF16">
    <property type="entry name" value="CYTOCHROME B"/>
    <property type="match status" value="1"/>
</dbReference>
<dbReference type="Pfam" id="PF00032">
    <property type="entry name" value="Cytochrom_B_C"/>
    <property type="match status" value="1"/>
</dbReference>
<dbReference type="Pfam" id="PF00033">
    <property type="entry name" value="Cytochrome_B"/>
    <property type="match status" value="1"/>
</dbReference>
<dbReference type="PIRSF" id="PIRSF038885">
    <property type="entry name" value="COB"/>
    <property type="match status" value="1"/>
</dbReference>
<dbReference type="SUPFAM" id="SSF81648">
    <property type="entry name" value="a domain/subunit of cytochrome bc1 complex (Ubiquinol-cytochrome c reductase)"/>
    <property type="match status" value="1"/>
</dbReference>
<dbReference type="SUPFAM" id="SSF81342">
    <property type="entry name" value="Transmembrane di-heme cytochromes"/>
    <property type="match status" value="1"/>
</dbReference>
<dbReference type="PROSITE" id="PS51003">
    <property type="entry name" value="CYTB_CTER"/>
    <property type="match status" value="1"/>
</dbReference>
<dbReference type="PROSITE" id="PS51002">
    <property type="entry name" value="CYTB_NTER"/>
    <property type="match status" value="1"/>
</dbReference>
<feature type="chain" id="PRO_0000255102" description="Cytochrome b">
    <location>
        <begin position="1"/>
        <end position="380"/>
    </location>
</feature>
<feature type="transmembrane region" description="Helical" evidence="2">
    <location>
        <begin position="33"/>
        <end position="53"/>
    </location>
</feature>
<feature type="transmembrane region" description="Helical" evidence="2">
    <location>
        <begin position="77"/>
        <end position="98"/>
    </location>
</feature>
<feature type="transmembrane region" description="Helical" evidence="2">
    <location>
        <begin position="113"/>
        <end position="133"/>
    </location>
</feature>
<feature type="transmembrane region" description="Helical" evidence="2">
    <location>
        <begin position="178"/>
        <end position="198"/>
    </location>
</feature>
<feature type="transmembrane region" description="Helical" evidence="2">
    <location>
        <begin position="226"/>
        <end position="246"/>
    </location>
</feature>
<feature type="transmembrane region" description="Helical" evidence="2">
    <location>
        <begin position="288"/>
        <end position="308"/>
    </location>
</feature>
<feature type="transmembrane region" description="Helical" evidence="2">
    <location>
        <begin position="320"/>
        <end position="340"/>
    </location>
</feature>
<feature type="transmembrane region" description="Helical" evidence="2">
    <location>
        <begin position="347"/>
        <end position="367"/>
    </location>
</feature>
<feature type="binding site" description="axial binding residue" evidence="2">
    <location>
        <position position="83"/>
    </location>
    <ligand>
        <name>heme b</name>
        <dbReference type="ChEBI" id="CHEBI:60344"/>
        <label>b562</label>
    </ligand>
    <ligandPart>
        <name>Fe</name>
        <dbReference type="ChEBI" id="CHEBI:18248"/>
    </ligandPart>
</feature>
<feature type="binding site" description="axial binding residue" evidence="2">
    <location>
        <position position="97"/>
    </location>
    <ligand>
        <name>heme b</name>
        <dbReference type="ChEBI" id="CHEBI:60344"/>
        <label>b566</label>
    </ligand>
    <ligandPart>
        <name>Fe</name>
        <dbReference type="ChEBI" id="CHEBI:18248"/>
    </ligandPart>
</feature>
<feature type="binding site" description="axial binding residue" evidence="2">
    <location>
        <position position="182"/>
    </location>
    <ligand>
        <name>heme b</name>
        <dbReference type="ChEBI" id="CHEBI:60344"/>
        <label>b562</label>
    </ligand>
    <ligandPart>
        <name>Fe</name>
        <dbReference type="ChEBI" id="CHEBI:18248"/>
    </ligandPart>
</feature>
<feature type="binding site" description="axial binding residue" evidence="2">
    <location>
        <position position="196"/>
    </location>
    <ligand>
        <name>heme b</name>
        <dbReference type="ChEBI" id="CHEBI:60344"/>
        <label>b566</label>
    </ligand>
    <ligandPart>
        <name>Fe</name>
        <dbReference type="ChEBI" id="CHEBI:18248"/>
    </ligandPart>
</feature>
<feature type="binding site" evidence="2">
    <location>
        <position position="201"/>
    </location>
    <ligand>
        <name>a ubiquinone</name>
        <dbReference type="ChEBI" id="CHEBI:16389"/>
    </ligand>
</feature>
<sequence>MTNIRKSHPLFKIINHSFIDLPTPSNISSWWNFGSLLGICLILQILTGLFLAMHYTADTSTAFSSVTHICRDVNYGWFIRYLHANGASMFFICLFIHVGRGMYYGSYAFMETWNIGIILMFTVMATAFMGYVLPWGQMSFWGATVITNLLSAIPYIGPTLVEWIWGGFSVDKATLTRFFAFHFILPFIIAALATVHLLFLHETGSNNPSGLNSDADKIPFHPYYTLKDFLGMLLLILTLISLVLFFPDLLGDPDNYMPANPLNTPPHIKPEWYFLFAYAILRSIPNKLGGVLALILSILILALLPLLHTSKQRSLMFRPITQTLYWILVADLLTLTWIGGQPVEHPFTIIGQLASILYFSIILILMPISGYIENKIIKLN</sequence>
<accession>Q9T475</accession>
<proteinExistence type="inferred from homology"/>
<gene>
    <name type="primary">MT-CYB</name>
    <name type="synonym">COB</name>
    <name type="synonym">CYTB</name>
    <name type="synonym">MTCYB</name>
</gene>
<protein>
    <recommendedName>
        <fullName>Cytochrome b</fullName>
    </recommendedName>
    <alternativeName>
        <fullName>Complex III subunit 3</fullName>
    </alternativeName>
    <alternativeName>
        <fullName>Complex III subunit III</fullName>
    </alternativeName>
    <alternativeName>
        <fullName>Cytochrome b-c1 complex subunit 3</fullName>
    </alternativeName>
    <alternativeName>
        <fullName>Ubiquinol-cytochrome-c reductase complex cytochrome b subunit</fullName>
    </alternativeName>
</protein>
<geneLocation type="mitochondrion"/>
<comment type="function">
    <text evidence="2">Component of the ubiquinol-cytochrome c reductase complex (complex III or cytochrome b-c1 complex) that is part of the mitochondrial respiratory chain. The b-c1 complex mediates electron transfer from ubiquinol to cytochrome c. Contributes to the generation of a proton gradient across the mitochondrial membrane that is then used for ATP synthesis.</text>
</comment>
<comment type="cofactor">
    <cofactor evidence="2">
        <name>heme b</name>
        <dbReference type="ChEBI" id="CHEBI:60344"/>
    </cofactor>
    <text evidence="2">Binds 2 heme b groups non-covalently.</text>
</comment>
<comment type="subunit">
    <text evidence="2">The cytochrome bc1 complex contains 11 subunits: 3 respiratory subunits (MT-CYB, CYC1 and UQCRFS1), 2 core proteins (UQCRC1 and UQCRC2) and 6 low-molecular weight proteins (UQCRH/QCR6, UQCRB/QCR7, UQCRQ/QCR8, UQCR10/QCR9, UQCR11/QCR10 and a cleavage product of UQCRFS1). This cytochrome bc1 complex then forms a dimer.</text>
</comment>
<comment type="subcellular location">
    <subcellularLocation>
        <location evidence="2">Mitochondrion inner membrane</location>
        <topology evidence="2">Multi-pass membrane protein</topology>
    </subcellularLocation>
</comment>
<comment type="miscellaneous">
    <text evidence="1">Heme 1 (or BL or b562) is low-potential and absorbs at about 562 nm, and heme 2 (or BH or b566) is high-potential and absorbs at about 566 nm.</text>
</comment>
<comment type="similarity">
    <text evidence="3 4">Belongs to the cytochrome b family.</text>
</comment>
<comment type="caution">
    <text evidence="2">The full-length protein contains only eight transmembrane helices, not nine as predicted by bioinformatics tools.</text>
</comment>
<keyword id="KW-0249">Electron transport</keyword>
<keyword id="KW-0349">Heme</keyword>
<keyword id="KW-0408">Iron</keyword>
<keyword id="KW-0472">Membrane</keyword>
<keyword id="KW-0479">Metal-binding</keyword>
<keyword id="KW-0496">Mitochondrion</keyword>
<keyword id="KW-0999">Mitochondrion inner membrane</keyword>
<keyword id="KW-0679">Respiratory chain</keyword>
<keyword id="KW-0812">Transmembrane</keyword>
<keyword id="KW-1133">Transmembrane helix</keyword>
<keyword id="KW-0813">Transport</keyword>
<keyword id="KW-0830">Ubiquinone</keyword>
<evidence type="ECO:0000250" key="1"/>
<evidence type="ECO:0000250" key="2">
    <source>
        <dbReference type="UniProtKB" id="P00157"/>
    </source>
</evidence>
<evidence type="ECO:0000255" key="3">
    <source>
        <dbReference type="PROSITE-ProRule" id="PRU00967"/>
    </source>
</evidence>
<evidence type="ECO:0000255" key="4">
    <source>
        <dbReference type="PROSITE-ProRule" id="PRU00968"/>
    </source>
</evidence>
<organism>
    <name type="scientific">Nesomys audeberti</name>
    <name type="common">Eastern red forest rat</name>
    <dbReference type="NCBI Taxonomy" id="107267"/>
    <lineage>
        <taxon>Eukaryota</taxon>
        <taxon>Metazoa</taxon>
        <taxon>Chordata</taxon>
        <taxon>Craniata</taxon>
        <taxon>Vertebrata</taxon>
        <taxon>Euteleostomi</taxon>
        <taxon>Mammalia</taxon>
        <taxon>Eutheria</taxon>
        <taxon>Euarchontoglires</taxon>
        <taxon>Glires</taxon>
        <taxon>Rodentia</taxon>
        <taxon>Myomorpha</taxon>
        <taxon>Muroidea</taxon>
        <taxon>Nesomyidae</taxon>
        <taxon>Nesomyinae</taxon>
        <taxon>Nesomys</taxon>
    </lineage>
</organism>
<reference key="1">
    <citation type="journal article" date="1999" name="Cladistics">
        <title>Molecular phylogeny and biogeography of Madagascar's native rodents (Muridae: Nesomyinae): a test of the single origin hypothesis.</title>
        <authorList>
            <person name="Jansa S.A."/>
            <person name="Goodman S.M."/>
            <person name="Tucker P.K."/>
        </authorList>
    </citation>
    <scope>NUCLEOTIDE SEQUENCE [GENOMIC DNA]</scope>
</reference>
<name>CYB_NESAU</name>